<protein>
    <recommendedName>
        <fullName evidence="1">Glycerol kinase</fullName>
        <ecNumber evidence="1">2.7.1.30</ecNumber>
    </recommendedName>
    <alternativeName>
        <fullName evidence="1">ATP:glycerol 3-phosphotransferase</fullName>
    </alternativeName>
    <alternativeName>
        <fullName evidence="1">Glycerokinase</fullName>
        <shortName evidence="1">GK</shortName>
    </alternativeName>
</protein>
<keyword id="KW-0021">Allosteric enzyme</keyword>
<keyword id="KW-0067">ATP-binding</keyword>
<keyword id="KW-0319">Glycerol metabolism</keyword>
<keyword id="KW-0418">Kinase</keyword>
<keyword id="KW-0479">Metal-binding</keyword>
<keyword id="KW-0547">Nucleotide-binding</keyword>
<keyword id="KW-1185">Reference proteome</keyword>
<keyword id="KW-0808">Transferase</keyword>
<keyword id="KW-0862">Zinc</keyword>
<feature type="chain" id="PRO_1000020718" description="Glycerol kinase">
    <location>
        <begin position="1"/>
        <end position="502"/>
    </location>
</feature>
<feature type="binding site" evidence="1">
    <location>
        <position position="14"/>
    </location>
    <ligand>
        <name>ADP</name>
        <dbReference type="ChEBI" id="CHEBI:456216"/>
    </ligand>
</feature>
<feature type="binding site" evidence="1">
    <location>
        <position position="14"/>
    </location>
    <ligand>
        <name>ATP</name>
        <dbReference type="ChEBI" id="CHEBI:30616"/>
    </ligand>
</feature>
<feature type="binding site" evidence="1">
    <location>
        <position position="14"/>
    </location>
    <ligand>
        <name>sn-glycerol 3-phosphate</name>
        <dbReference type="ChEBI" id="CHEBI:57597"/>
    </ligand>
</feature>
<feature type="binding site" evidence="1">
    <location>
        <position position="15"/>
    </location>
    <ligand>
        <name>ATP</name>
        <dbReference type="ChEBI" id="CHEBI:30616"/>
    </ligand>
</feature>
<feature type="binding site" evidence="1">
    <location>
        <position position="16"/>
    </location>
    <ligand>
        <name>ATP</name>
        <dbReference type="ChEBI" id="CHEBI:30616"/>
    </ligand>
</feature>
<feature type="binding site" evidence="1">
    <location>
        <position position="18"/>
    </location>
    <ligand>
        <name>ADP</name>
        <dbReference type="ChEBI" id="CHEBI:456216"/>
    </ligand>
</feature>
<feature type="binding site" evidence="1">
    <location>
        <position position="84"/>
    </location>
    <ligand>
        <name>glycerol</name>
        <dbReference type="ChEBI" id="CHEBI:17754"/>
    </ligand>
</feature>
<feature type="binding site" evidence="1">
    <location>
        <position position="84"/>
    </location>
    <ligand>
        <name>sn-glycerol 3-phosphate</name>
        <dbReference type="ChEBI" id="CHEBI:57597"/>
    </ligand>
</feature>
<feature type="binding site" evidence="1">
    <location>
        <position position="85"/>
    </location>
    <ligand>
        <name>glycerol</name>
        <dbReference type="ChEBI" id="CHEBI:17754"/>
    </ligand>
</feature>
<feature type="binding site" evidence="1">
    <location>
        <position position="85"/>
    </location>
    <ligand>
        <name>sn-glycerol 3-phosphate</name>
        <dbReference type="ChEBI" id="CHEBI:57597"/>
    </ligand>
</feature>
<feature type="binding site" evidence="1">
    <location>
        <position position="136"/>
    </location>
    <ligand>
        <name>glycerol</name>
        <dbReference type="ChEBI" id="CHEBI:17754"/>
    </ligand>
</feature>
<feature type="binding site" evidence="1">
    <location>
        <position position="136"/>
    </location>
    <ligand>
        <name>sn-glycerol 3-phosphate</name>
        <dbReference type="ChEBI" id="CHEBI:57597"/>
    </ligand>
</feature>
<feature type="binding site" evidence="1">
    <location>
        <position position="246"/>
    </location>
    <ligand>
        <name>glycerol</name>
        <dbReference type="ChEBI" id="CHEBI:17754"/>
    </ligand>
</feature>
<feature type="binding site" evidence="1">
    <location>
        <position position="246"/>
    </location>
    <ligand>
        <name>sn-glycerol 3-phosphate</name>
        <dbReference type="ChEBI" id="CHEBI:57597"/>
    </ligand>
</feature>
<feature type="binding site" evidence="1">
    <location>
        <position position="247"/>
    </location>
    <ligand>
        <name>glycerol</name>
        <dbReference type="ChEBI" id="CHEBI:17754"/>
    </ligand>
</feature>
<feature type="binding site" evidence="1">
    <location>
        <position position="268"/>
    </location>
    <ligand>
        <name>ADP</name>
        <dbReference type="ChEBI" id="CHEBI:456216"/>
    </ligand>
</feature>
<feature type="binding site" evidence="1">
    <location>
        <position position="268"/>
    </location>
    <ligand>
        <name>ATP</name>
        <dbReference type="ChEBI" id="CHEBI:30616"/>
    </ligand>
</feature>
<feature type="binding site" evidence="1">
    <location>
        <position position="311"/>
    </location>
    <ligand>
        <name>ADP</name>
        <dbReference type="ChEBI" id="CHEBI:456216"/>
    </ligand>
</feature>
<feature type="binding site" evidence="1">
    <location>
        <position position="311"/>
    </location>
    <ligand>
        <name>ATP</name>
        <dbReference type="ChEBI" id="CHEBI:30616"/>
    </ligand>
</feature>
<feature type="binding site" evidence="1">
    <location>
        <position position="315"/>
    </location>
    <ligand>
        <name>ATP</name>
        <dbReference type="ChEBI" id="CHEBI:30616"/>
    </ligand>
</feature>
<feature type="binding site" evidence="1">
    <location>
        <position position="412"/>
    </location>
    <ligand>
        <name>ADP</name>
        <dbReference type="ChEBI" id="CHEBI:456216"/>
    </ligand>
</feature>
<feature type="binding site" evidence="1">
    <location>
        <position position="412"/>
    </location>
    <ligand>
        <name>ATP</name>
        <dbReference type="ChEBI" id="CHEBI:30616"/>
    </ligand>
</feature>
<feature type="binding site" evidence="1">
    <location>
        <position position="416"/>
    </location>
    <ligand>
        <name>ADP</name>
        <dbReference type="ChEBI" id="CHEBI:456216"/>
    </ligand>
</feature>
<organism>
    <name type="scientific">Citrobacter koseri (strain ATCC BAA-895 / CDC 4225-83 / SGSC4696)</name>
    <dbReference type="NCBI Taxonomy" id="290338"/>
    <lineage>
        <taxon>Bacteria</taxon>
        <taxon>Pseudomonadati</taxon>
        <taxon>Pseudomonadota</taxon>
        <taxon>Gammaproteobacteria</taxon>
        <taxon>Enterobacterales</taxon>
        <taxon>Enterobacteriaceae</taxon>
        <taxon>Citrobacter</taxon>
    </lineage>
</organism>
<name>GLPK_CITK8</name>
<dbReference type="EC" id="2.7.1.30" evidence="1"/>
<dbReference type="EMBL" id="CP000822">
    <property type="protein sequence ID" value="ABV14163.1"/>
    <property type="molecule type" value="Genomic_DNA"/>
</dbReference>
<dbReference type="RefSeq" id="WP_012133870.1">
    <property type="nucleotide sequence ID" value="NC_009792.1"/>
</dbReference>
<dbReference type="SMR" id="A8AL00"/>
<dbReference type="STRING" id="290338.CKO_03072"/>
<dbReference type="GeneID" id="45136874"/>
<dbReference type="KEGG" id="cko:CKO_03072"/>
<dbReference type="HOGENOM" id="CLU_009281_2_3_6"/>
<dbReference type="OrthoDB" id="9805576at2"/>
<dbReference type="UniPathway" id="UPA00618">
    <property type="reaction ID" value="UER00672"/>
</dbReference>
<dbReference type="Proteomes" id="UP000008148">
    <property type="component" value="Chromosome"/>
</dbReference>
<dbReference type="GO" id="GO:0005829">
    <property type="term" value="C:cytosol"/>
    <property type="evidence" value="ECO:0007669"/>
    <property type="project" value="TreeGrafter"/>
</dbReference>
<dbReference type="GO" id="GO:0005524">
    <property type="term" value="F:ATP binding"/>
    <property type="evidence" value="ECO:0007669"/>
    <property type="project" value="UniProtKB-UniRule"/>
</dbReference>
<dbReference type="GO" id="GO:0004370">
    <property type="term" value="F:glycerol kinase activity"/>
    <property type="evidence" value="ECO:0000250"/>
    <property type="project" value="UniProtKB"/>
</dbReference>
<dbReference type="GO" id="GO:0046872">
    <property type="term" value="F:metal ion binding"/>
    <property type="evidence" value="ECO:0007669"/>
    <property type="project" value="UniProtKB-KW"/>
</dbReference>
<dbReference type="GO" id="GO:0019563">
    <property type="term" value="P:glycerol catabolic process"/>
    <property type="evidence" value="ECO:0007669"/>
    <property type="project" value="UniProtKB-UniRule"/>
</dbReference>
<dbReference type="GO" id="GO:0006071">
    <property type="term" value="P:glycerol metabolic process"/>
    <property type="evidence" value="ECO:0000250"/>
    <property type="project" value="UniProtKB"/>
</dbReference>
<dbReference type="GO" id="GO:0006072">
    <property type="term" value="P:glycerol-3-phosphate metabolic process"/>
    <property type="evidence" value="ECO:0007669"/>
    <property type="project" value="InterPro"/>
</dbReference>
<dbReference type="CDD" id="cd07786">
    <property type="entry name" value="FGGY_EcGK_like"/>
    <property type="match status" value="1"/>
</dbReference>
<dbReference type="FunFam" id="3.30.420.40:FF:000007">
    <property type="entry name" value="Glycerol kinase"/>
    <property type="match status" value="1"/>
</dbReference>
<dbReference type="FunFam" id="3.30.420.40:FF:000008">
    <property type="entry name" value="Glycerol kinase"/>
    <property type="match status" value="1"/>
</dbReference>
<dbReference type="Gene3D" id="3.30.420.40">
    <property type="match status" value="2"/>
</dbReference>
<dbReference type="HAMAP" id="MF_00186">
    <property type="entry name" value="Glycerol_kin"/>
    <property type="match status" value="1"/>
</dbReference>
<dbReference type="InterPro" id="IPR043129">
    <property type="entry name" value="ATPase_NBD"/>
</dbReference>
<dbReference type="InterPro" id="IPR000577">
    <property type="entry name" value="Carb_kinase_FGGY"/>
</dbReference>
<dbReference type="InterPro" id="IPR018483">
    <property type="entry name" value="Carb_kinase_FGGY_CS"/>
</dbReference>
<dbReference type="InterPro" id="IPR018485">
    <property type="entry name" value="FGGY_C"/>
</dbReference>
<dbReference type="InterPro" id="IPR018484">
    <property type="entry name" value="FGGY_N"/>
</dbReference>
<dbReference type="InterPro" id="IPR005999">
    <property type="entry name" value="Glycerol_kin"/>
</dbReference>
<dbReference type="NCBIfam" id="TIGR01311">
    <property type="entry name" value="glycerol_kin"/>
    <property type="match status" value="1"/>
</dbReference>
<dbReference type="NCBIfam" id="NF000756">
    <property type="entry name" value="PRK00047.1"/>
    <property type="match status" value="1"/>
</dbReference>
<dbReference type="PANTHER" id="PTHR10196:SF69">
    <property type="entry name" value="GLYCEROL KINASE"/>
    <property type="match status" value="1"/>
</dbReference>
<dbReference type="PANTHER" id="PTHR10196">
    <property type="entry name" value="SUGAR KINASE"/>
    <property type="match status" value="1"/>
</dbReference>
<dbReference type="Pfam" id="PF02782">
    <property type="entry name" value="FGGY_C"/>
    <property type="match status" value="1"/>
</dbReference>
<dbReference type="Pfam" id="PF00370">
    <property type="entry name" value="FGGY_N"/>
    <property type="match status" value="1"/>
</dbReference>
<dbReference type="PIRSF" id="PIRSF000538">
    <property type="entry name" value="GlpK"/>
    <property type="match status" value="1"/>
</dbReference>
<dbReference type="SUPFAM" id="SSF53067">
    <property type="entry name" value="Actin-like ATPase domain"/>
    <property type="match status" value="2"/>
</dbReference>
<dbReference type="PROSITE" id="PS00933">
    <property type="entry name" value="FGGY_KINASES_1"/>
    <property type="match status" value="1"/>
</dbReference>
<dbReference type="PROSITE" id="PS00445">
    <property type="entry name" value="FGGY_KINASES_2"/>
    <property type="match status" value="1"/>
</dbReference>
<gene>
    <name evidence="1" type="primary">glpK</name>
    <name type="ordered locus">CKO_03072</name>
</gene>
<sequence length="502" mass="56139">MTEKKYIVALDQGTTSSRAVVMDHDANIVSVSQREFEQIYPKAGWVEHDPMEIWATQSSTLVEVLAKADISSDQIAAIGITNQRETTIVWERETGKPIYNAIVWQCRRTAEICERLKRDGMEDYIRNNTGLVIDPYFSGTKVKWILDHVEGSRERARRGELLFGTVDTWLIWKMTQGRVHVTDYTNASRTMLFNIHTLDWDDKMLDALDIPRAMLPEVRRSSEVYGQTNIGGKGGTRIPIAGIAGDQQAALFGQLCVKEGMAKNTYGTGCFMLMNTGEKAVKSENGLLTTIACGPTGEVNYALEGAVFMAGASIQWLRDEMKLISDAFDSEYFATKVKDTNGVYVVPAFTGLGAPYWDPYARGAIFGLTRGVNSNHIIRATLESIAYQTRDVLEAMQADSGIRLHALRVDGGAVANNFLMQFQSDILGTRVERPEVREVTALGAAYLAGLAVGYWQNLDELQEKAVIEREFRPGIETTERNFRYSGWKKAVKRALAWEDHEE</sequence>
<proteinExistence type="inferred from homology"/>
<evidence type="ECO:0000255" key="1">
    <source>
        <dbReference type="HAMAP-Rule" id="MF_00186"/>
    </source>
</evidence>
<reference key="1">
    <citation type="submission" date="2007-08" db="EMBL/GenBank/DDBJ databases">
        <authorList>
            <consortium name="The Citrobacter koseri Genome Sequencing Project"/>
            <person name="McClelland M."/>
            <person name="Sanderson E.K."/>
            <person name="Porwollik S."/>
            <person name="Spieth J."/>
            <person name="Clifton W.S."/>
            <person name="Latreille P."/>
            <person name="Courtney L."/>
            <person name="Wang C."/>
            <person name="Pepin K."/>
            <person name="Bhonagiri V."/>
            <person name="Nash W."/>
            <person name="Johnson M."/>
            <person name="Thiruvilangam P."/>
            <person name="Wilson R."/>
        </authorList>
    </citation>
    <scope>NUCLEOTIDE SEQUENCE [LARGE SCALE GENOMIC DNA]</scope>
    <source>
        <strain>ATCC BAA-895 / CDC 4225-83 / SGSC4696</strain>
    </source>
</reference>
<accession>A8AL00</accession>
<comment type="function">
    <text evidence="1">Key enzyme in the regulation of glycerol uptake and metabolism. Catalyzes the phosphorylation of glycerol to yield sn-glycerol 3-phosphate.</text>
</comment>
<comment type="catalytic activity">
    <reaction evidence="1">
        <text>glycerol + ATP = sn-glycerol 3-phosphate + ADP + H(+)</text>
        <dbReference type="Rhea" id="RHEA:21644"/>
        <dbReference type="ChEBI" id="CHEBI:15378"/>
        <dbReference type="ChEBI" id="CHEBI:17754"/>
        <dbReference type="ChEBI" id="CHEBI:30616"/>
        <dbReference type="ChEBI" id="CHEBI:57597"/>
        <dbReference type="ChEBI" id="CHEBI:456216"/>
        <dbReference type="EC" id="2.7.1.30"/>
    </reaction>
</comment>
<comment type="activity regulation">
    <text evidence="1">Activity of this regulatory enzyme is affected by several metabolites. Allosterically and non-competitively inhibited by fructose 1,6-bisphosphate (FBP) and unphosphorylated phosphocarrier protein EIIA-Glc (III-Glc), an integral component of the bacterial phosphotransferase (PTS) system.</text>
</comment>
<comment type="pathway">
    <text evidence="1">Polyol metabolism; glycerol degradation via glycerol kinase pathway; sn-glycerol 3-phosphate from glycerol: step 1/1.</text>
</comment>
<comment type="subunit">
    <text evidence="1">Homotetramer and homodimer (in equilibrium). Heterodimer with EIIA-Glc. Binds 1 zinc ion per glycerol kinase EIIA-Glc dimer. The zinc ion is important for dimerization.</text>
</comment>
<comment type="similarity">
    <text evidence="1">Belongs to the FGGY kinase family.</text>
</comment>